<proteinExistence type="inferred from homology"/>
<reference key="1">
    <citation type="journal article" date="2010" name="PLoS ONE">
        <title>Genome sequence of Cronobacter sakazakii BAA-894 and comparative genomic hybridization analysis with other Cronobacter species.</title>
        <authorList>
            <person name="Kucerova E."/>
            <person name="Clifton S.W."/>
            <person name="Xia X.Q."/>
            <person name="Long F."/>
            <person name="Porwollik S."/>
            <person name="Fulton L."/>
            <person name="Fronick C."/>
            <person name="Minx P."/>
            <person name="Kyung K."/>
            <person name="Warren W."/>
            <person name="Fulton R."/>
            <person name="Feng D."/>
            <person name="Wollam A."/>
            <person name="Shah N."/>
            <person name="Bhonagiri V."/>
            <person name="Nash W.E."/>
            <person name="Hallsworth-Pepin K."/>
            <person name="Wilson R.K."/>
            <person name="McClelland M."/>
            <person name="Forsythe S.J."/>
        </authorList>
    </citation>
    <scope>NUCLEOTIDE SEQUENCE [LARGE SCALE GENOMIC DNA]</scope>
    <source>
        <strain>ATCC BAA-894</strain>
    </source>
</reference>
<protein>
    <recommendedName>
        <fullName evidence="1">Methylthioribulose-1-phosphate dehydratase</fullName>
        <shortName evidence="1">MTRu-1-P dehydratase</shortName>
        <ecNumber evidence="1">4.2.1.109</ecNumber>
    </recommendedName>
</protein>
<organism>
    <name type="scientific">Cronobacter sakazakii (strain ATCC BAA-894)</name>
    <name type="common">Enterobacter sakazakii</name>
    <dbReference type="NCBI Taxonomy" id="290339"/>
    <lineage>
        <taxon>Bacteria</taxon>
        <taxon>Pseudomonadati</taxon>
        <taxon>Pseudomonadota</taxon>
        <taxon>Gammaproteobacteria</taxon>
        <taxon>Enterobacterales</taxon>
        <taxon>Enterobacteriaceae</taxon>
        <taxon>Cronobacter</taxon>
    </lineage>
</organism>
<sequence>MSKESQLEALVAACHWIGAKGWAPATGGNMSLREDARWCWLSESGKDKGSLTTDDFLQVDIATNLAPSGRKPSAETGLHTLIYRLFPEANCVLHVHTVNATVLSRVEKSDALHLSGYEMQKSLAGQITHLDDVPVAIFDNDQDIDALAERIARHHRQFPLRYGFLLRGHGLTCWGSDVAVARRHLEGLEFLFECEMQRRLLERA</sequence>
<evidence type="ECO:0000255" key="1">
    <source>
        <dbReference type="HAMAP-Rule" id="MF_01677"/>
    </source>
</evidence>
<name>MTNB_CROS8</name>
<accession>A7MK09</accession>
<comment type="function">
    <text evidence="1">Catalyzes the dehydration of methylthioribulose-1-phosphate (MTRu-1-P) into 2,3-diketo-5-methylthiopentyl-1-phosphate (DK-MTP-1-P).</text>
</comment>
<comment type="catalytic activity">
    <reaction evidence="1">
        <text>5-(methylsulfanyl)-D-ribulose 1-phosphate = 5-methylsulfanyl-2,3-dioxopentyl phosphate + H2O</text>
        <dbReference type="Rhea" id="RHEA:15549"/>
        <dbReference type="ChEBI" id="CHEBI:15377"/>
        <dbReference type="ChEBI" id="CHEBI:58548"/>
        <dbReference type="ChEBI" id="CHEBI:58828"/>
        <dbReference type="EC" id="4.2.1.109"/>
    </reaction>
</comment>
<comment type="cofactor">
    <cofactor evidence="1">
        <name>Zn(2+)</name>
        <dbReference type="ChEBI" id="CHEBI:29105"/>
    </cofactor>
    <text evidence="1">Binds 1 zinc ion per subunit.</text>
</comment>
<comment type="pathway">
    <text evidence="1">Amino-acid biosynthesis; L-methionine biosynthesis via salvage pathway; L-methionine from S-methyl-5-thio-alpha-D-ribose 1-phosphate: step 2/6.</text>
</comment>
<comment type="similarity">
    <text evidence="1">Belongs to the aldolase class II family. MtnB subfamily.</text>
</comment>
<feature type="chain" id="PRO_0000357075" description="Methylthioribulose-1-phosphate dehydratase">
    <location>
        <begin position="1"/>
        <end position="204"/>
    </location>
</feature>
<feature type="binding site" evidence="1">
    <location>
        <position position="94"/>
    </location>
    <ligand>
        <name>Zn(2+)</name>
        <dbReference type="ChEBI" id="CHEBI:29105"/>
    </ligand>
</feature>
<feature type="binding site" evidence="1">
    <location>
        <position position="96"/>
    </location>
    <ligand>
        <name>Zn(2+)</name>
        <dbReference type="ChEBI" id="CHEBI:29105"/>
    </ligand>
</feature>
<keyword id="KW-0028">Amino-acid biosynthesis</keyword>
<keyword id="KW-0456">Lyase</keyword>
<keyword id="KW-0479">Metal-binding</keyword>
<keyword id="KW-0486">Methionine biosynthesis</keyword>
<keyword id="KW-1185">Reference proteome</keyword>
<keyword id="KW-0862">Zinc</keyword>
<dbReference type="EC" id="4.2.1.109" evidence="1"/>
<dbReference type="EMBL" id="CP000783">
    <property type="protein sequence ID" value="ABU77956.1"/>
    <property type="molecule type" value="Genomic_DNA"/>
</dbReference>
<dbReference type="RefSeq" id="WP_012125390.1">
    <property type="nucleotide sequence ID" value="NC_009778.1"/>
</dbReference>
<dbReference type="SMR" id="A7MK09"/>
<dbReference type="KEGG" id="esa:ESA_02724"/>
<dbReference type="PATRIC" id="fig|290339.8.peg.2423"/>
<dbReference type="HOGENOM" id="CLU_006033_4_1_6"/>
<dbReference type="UniPathway" id="UPA00904">
    <property type="reaction ID" value="UER00875"/>
</dbReference>
<dbReference type="Proteomes" id="UP000000260">
    <property type="component" value="Chromosome"/>
</dbReference>
<dbReference type="GO" id="GO:0005829">
    <property type="term" value="C:cytosol"/>
    <property type="evidence" value="ECO:0007669"/>
    <property type="project" value="TreeGrafter"/>
</dbReference>
<dbReference type="GO" id="GO:0016832">
    <property type="term" value="F:aldehyde-lyase activity"/>
    <property type="evidence" value="ECO:0007669"/>
    <property type="project" value="TreeGrafter"/>
</dbReference>
<dbReference type="GO" id="GO:0046570">
    <property type="term" value="F:methylthioribulose 1-phosphate dehydratase activity"/>
    <property type="evidence" value="ECO:0007669"/>
    <property type="project" value="UniProtKB-UniRule"/>
</dbReference>
<dbReference type="GO" id="GO:0008270">
    <property type="term" value="F:zinc ion binding"/>
    <property type="evidence" value="ECO:0007669"/>
    <property type="project" value="UniProtKB-UniRule"/>
</dbReference>
<dbReference type="GO" id="GO:0019509">
    <property type="term" value="P:L-methionine salvage from methylthioadenosine"/>
    <property type="evidence" value="ECO:0007669"/>
    <property type="project" value="UniProtKB-UniRule"/>
</dbReference>
<dbReference type="GO" id="GO:0019323">
    <property type="term" value="P:pentose catabolic process"/>
    <property type="evidence" value="ECO:0007669"/>
    <property type="project" value="TreeGrafter"/>
</dbReference>
<dbReference type="Gene3D" id="3.40.225.10">
    <property type="entry name" value="Class II aldolase/adducin N-terminal domain"/>
    <property type="match status" value="1"/>
</dbReference>
<dbReference type="HAMAP" id="MF_01677">
    <property type="entry name" value="Salvage_MtnB"/>
    <property type="match status" value="1"/>
</dbReference>
<dbReference type="InterPro" id="IPR050197">
    <property type="entry name" value="Aldolase_class_II_sugar_metab"/>
</dbReference>
<dbReference type="InterPro" id="IPR001303">
    <property type="entry name" value="Aldolase_II/adducin_N"/>
</dbReference>
<dbReference type="InterPro" id="IPR036409">
    <property type="entry name" value="Aldolase_II/adducin_N_sf"/>
</dbReference>
<dbReference type="InterPro" id="IPR017714">
    <property type="entry name" value="MethylthioRu-1-P_deHdtase_MtnB"/>
</dbReference>
<dbReference type="NCBIfam" id="NF006672">
    <property type="entry name" value="PRK09220.1"/>
    <property type="match status" value="1"/>
</dbReference>
<dbReference type="NCBIfam" id="TIGR03328">
    <property type="entry name" value="salvage_mtnB"/>
    <property type="match status" value="1"/>
</dbReference>
<dbReference type="PANTHER" id="PTHR22789:SF0">
    <property type="entry name" value="3-OXO-TETRONATE 4-PHOSPHATE DECARBOXYLASE-RELATED"/>
    <property type="match status" value="1"/>
</dbReference>
<dbReference type="PANTHER" id="PTHR22789">
    <property type="entry name" value="FUCULOSE PHOSPHATE ALDOLASE"/>
    <property type="match status" value="1"/>
</dbReference>
<dbReference type="Pfam" id="PF00596">
    <property type="entry name" value="Aldolase_II"/>
    <property type="match status" value="1"/>
</dbReference>
<dbReference type="SMART" id="SM01007">
    <property type="entry name" value="Aldolase_II"/>
    <property type="match status" value="1"/>
</dbReference>
<dbReference type="SUPFAM" id="SSF53639">
    <property type="entry name" value="AraD/HMP-PK domain-like"/>
    <property type="match status" value="1"/>
</dbReference>
<gene>
    <name evidence="1" type="primary">mtnB</name>
    <name type="ordered locus">ESA_02724</name>
</gene>